<evidence type="ECO:0000255" key="1">
    <source>
        <dbReference type="HAMAP-Rule" id="MF_00057"/>
    </source>
</evidence>
<evidence type="ECO:0000305" key="2"/>
<reference key="1">
    <citation type="journal article" date="2007" name="Science">
        <title>Legumes symbioses: absence of nod genes in photosynthetic bradyrhizobia.</title>
        <authorList>
            <person name="Giraud E."/>
            <person name="Moulin L."/>
            <person name="Vallenet D."/>
            <person name="Barbe V."/>
            <person name="Cytryn E."/>
            <person name="Avarre J.-C."/>
            <person name="Jaubert M."/>
            <person name="Simon D."/>
            <person name="Cartieaux F."/>
            <person name="Prin Y."/>
            <person name="Bena G."/>
            <person name="Hannibal L."/>
            <person name="Fardoux J."/>
            <person name="Kojadinovic M."/>
            <person name="Vuillet L."/>
            <person name="Lajus A."/>
            <person name="Cruveiller S."/>
            <person name="Rouy Z."/>
            <person name="Mangenot S."/>
            <person name="Segurens B."/>
            <person name="Dossat C."/>
            <person name="Franck W.L."/>
            <person name="Chang W.-S."/>
            <person name="Saunders E."/>
            <person name="Bruce D."/>
            <person name="Richardson P."/>
            <person name="Normand P."/>
            <person name="Dreyfus B."/>
            <person name="Pignol D."/>
            <person name="Stacey G."/>
            <person name="Emerich D."/>
            <person name="Vermeglio A."/>
            <person name="Medigue C."/>
            <person name="Sadowsky M."/>
        </authorList>
    </citation>
    <scope>NUCLEOTIDE SEQUENCE [LARGE SCALE GENOMIC DNA]</scope>
    <source>
        <strain>ORS 278</strain>
    </source>
</reference>
<accession>A4YLY9</accession>
<dbReference type="EC" id="2.7.7.38" evidence="1"/>
<dbReference type="EMBL" id="CU234118">
    <property type="protein sequence ID" value="CAL74915.1"/>
    <property type="status" value="ALT_INIT"/>
    <property type="molecule type" value="Genomic_DNA"/>
</dbReference>
<dbReference type="RefSeq" id="WP_041756098.1">
    <property type="nucleotide sequence ID" value="NC_009445.1"/>
</dbReference>
<dbReference type="SMR" id="A4YLY9"/>
<dbReference type="STRING" id="114615.BRADO1000"/>
<dbReference type="KEGG" id="bra:BRADO1000"/>
<dbReference type="eggNOG" id="COG1212">
    <property type="taxonomic scope" value="Bacteria"/>
</dbReference>
<dbReference type="HOGENOM" id="CLU_065038_0_1_5"/>
<dbReference type="OrthoDB" id="9815559at2"/>
<dbReference type="UniPathway" id="UPA00030"/>
<dbReference type="UniPathway" id="UPA00358">
    <property type="reaction ID" value="UER00476"/>
</dbReference>
<dbReference type="Proteomes" id="UP000001994">
    <property type="component" value="Chromosome"/>
</dbReference>
<dbReference type="GO" id="GO:0005829">
    <property type="term" value="C:cytosol"/>
    <property type="evidence" value="ECO:0007669"/>
    <property type="project" value="TreeGrafter"/>
</dbReference>
<dbReference type="GO" id="GO:0008690">
    <property type="term" value="F:3-deoxy-manno-octulosonate cytidylyltransferase activity"/>
    <property type="evidence" value="ECO:0007669"/>
    <property type="project" value="UniProtKB-UniRule"/>
</dbReference>
<dbReference type="GO" id="GO:0033468">
    <property type="term" value="P:CMP-keto-3-deoxy-D-manno-octulosonic acid biosynthetic process"/>
    <property type="evidence" value="ECO:0007669"/>
    <property type="project" value="UniProtKB-UniRule"/>
</dbReference>
<dbReference type="GO" id="GO:0009103">
    <property type="term" value="P:lipopolysaccharide biosynthetic process"/>
    <property type="evidence" value="ECO:0007669"/>
    <property type="project" value="UniProtKB-UniRule"/>
</dbReference>
<dbReference type="CDD" id="cd02517">
    <property type="entry name" value="CMP-KDO-Synthetase"/>
    <property type="match status" value="1"/>
</dbReference>
<dbReference type="Gene3D" id="3.90.550.10">
    <property type="entry name" value="Spore Coat Polysaccharide Biosynthesis Protein SpsA, Chain A"/>
    <property type="match status" value="1"/>
</dbReference>
<dbReference type="HAMAP" id="MF_00057">
    <property type="entry name" value="KdsB"/>
    <property type="match status" value="1"/>
</dbReference>
<dbReference type="InterPro" id="IPR003329">
    <property type="entry name" value="Cytidylyl_trans"/>
</dbReference>
<dbReference type="InterPro" id="IPR004528">
    <property type="entry name" value="KdsB"/>
</dbReference>
<dbReference type="InterPro" id="IPR029044">
    <property type="entry name" value="Nucleotide-diphossugar_trans"/>
</dbReference>
<dbReference type="NCBIfam" id="TIGR00466">
    <property type="entry name" value="kdsB"/>
    <property type="match status" value="1"/>
</dbReference>
<dbReference type="NCBIfam" id="NF003948">
    <property type="entry name" value="PRK05450.1-1"/>
    <property type="match status" value="1"/>
</dbReference>
<dbReference type="NCBIfam" id="NF003952">
    <property type="entry name" value="PRK05450.1-5"/>
    <property type="match status" value="1"/>
</dbReference>
<dbReference type="PANTHER" id="PTHR42866">
    <property type="entry name" value="3-DEOXY-MANNO-OCTULOSONATE CYTIDYLYLTRANSFERASE"/>
    <property type="match status" value="1"/>
</dbReference>
<dbReference type="PANTHER" id="PTHR42866:SF2">
    <property type="entry name" value="3-DEOXY-MANNO-OCTULOSONATE CYTIDYLYLTRANSFERASE, MITOCHONDRIAL"/>
    <property type="match status" value="1"/>
</dbReference>
<dbReference type="Pfam" id="PF02348">
    <property type="entry name" value="CTP_transf_3"/>
    <property type="match status" value="1"/>
</dbReference>
<dbReference type="SUPFAM" id="SSF53448">
    <property type="entry name" value="Nucleotide-diphospho-sugar transferases"/>
    <property type="match status" value="1"/>
</dbReference>
<name>KDSB_BRASO</name>
<gene>
    <name evidence="1" type="primary">kdsB</name>
    <name type="ordered locus">BRADO1000</name>
</gene>
<protein>
    <recommendedName>
        <fullName evidence="1">3-deoxy-manno-octulosonate cytidylyltransferase</fullName>
        <ecNumber evidence="1">2.7.7.38</ecNumber>
    </recommendedName>
    <alternativeName>
        <fullName evidence="1">CMP-2-keto-3-deoxyoctulosonic acid synthase</fullName>
        <shortName evidence="1">CKS</shortName>
        <shortName evidence="1">CMP-KDO synthase</shortName>
    </alternativeName>
</protein>
<comment type="function">
    <text evidence="1">Activates KDO (a required 8-carbon sugar) for incorporation into bacterial lipopolysaccharide in Gram-negative bacteria.</text>
</comment>
<comment type="catalytic activity">
    <reaction evidence="1">
        <text>3-deoxy-alpha-D-manno-oct-2-ulosonate + CTP = CMP-3-deoxy-beta-D-manno-octulosonate + diphosphate</text>
        <dbReference type="Rhea" id="RHEA:23448"/>
        <dbReference type="ChEBI" id="CHEBI:33019"/>
        <dbReference type="ChEBI" id="CHEBI:37563"/>
        <dbReference type="ChEBI" id="CHEBI:85986"/>
        <dbReference type="ChEBI" id="CHEBI:85987"/>
        <dbReference type="EC" id="2.7.7.38"/>
    </reaction>
</comment>
<comment type="pathway">
    <text evidence="1">Nucleotide-sugar biosynthesis; CMP-3-deoxy-D-manno-octulosonate biosynthesis; CMP-3-deoxy-D-manno-octulosonate from 3-deoxy-D-manno-octulosonate and CTP: step 1/1.</text>
</comment>
<comment type="pathway">
    <text evidence="1">Bacterial outer membrane biogenesis; lipopolysaccharide biosynthesis.</text>
</comment>
<comment type="subcellular location">
    <subcellularLocation>
        <location evidence="1">Cytoplasm</location>
    </subcellularLocation>
</comment>
<comment type="similarity">
    <text evidence="1">Belongs to the KdsB family.</text>
</comment>
<comment type="sequence caution" evidence="2">
    <conflict type="erroneous initiation">
        <sequence resource="EMBL-CDS" id="CAL74915"/>
    </conflict>
</comment>
<proteinExistence type="inferred from homology"/>
<keyword id="KW-0963">Cytoplasm</keyword>
<keyword id="KW-0448">Lipopolysaccharide biosynthesis</keyword>
<keyword id="KW-0548">Nucleotidyltransferase</keyword>
<keyword id="KW-1185">Reference proteome</keyword>
<keyword id="KW-0808">Transferase</keyword>
<sequence length="246" mass="26557">MTRSKILVLIPARMASTRLPGKPLLDIAGVPMIVQVLRRAEEAAIGRVAVATDTPEIAAAVTAAGGEVVMTRPDHPSGSDRIYEALCKLDPAGEADFVVNLQGDFPTIDPRSISDVLPPLDDPAVDIATLAAQIHTEEESLNPNVVKAVGSPLGGRRMRALYFTRATAPHGDGPRYHHIGLYAYRRAALERFVRLPPSPLEQQEKLEQLRALEAGMRIDVMVVDAVPRGVDTPADLETARRLLSKA</sequence>
<feature type="chain" id="PRO_0000370010" description="3-deoxy-manno-octulosonate cytidylyltransferase">
    <location>
        <begin position="1"/>
        <end position="246"/>
    </location>
</feature>
<organism>
    <name type="scientific">Bradyrhizobium sp. (strain ORS 278)</name>
    <dbReference type="NCBI Taxonomy" id="114615"/>
    <lineage>
        <taxon>Bacteria</taxon>
        <taxon>Pseudomonadati</taxon>
        <taxon>Pseudomonadota</taxon>
        <taxon>Alphaproteobacteria</taxon>
        <taxon>Hyphomicrobiales</taxon>
        <taxon>Nitrobacteraceae</taxon>
        <taxon>Bradyrhizobium</taxon>
    </lineage>
</organism>